<dbReference type="EC" id="2.3.1.275" evidence="1"/>
<dbReference type="EMBL" id="CP000964">
    <property type="protein sequence ID" value="ACI07446.1"/>
    <property type="molecule type" value="Genomic_DNA"/>
</dbReference>
<dbReference type="SMR" id="B5XU32"/>
<dbReference type="KEGG" id="kpe:KPK_0657"/>
<dbReference type="HOGENOM" id="CLU_081254_0_2_6"/>
<dbReference type="UniPathway" id="UPA00085"/>
<dbReference type="Proteomes" id="UP000001734">
    <property type="component" value="Chromosome"/>
</dbReference>
<dbReference type="GO" id="GO:0005886">
    <property type="term" value="C:plasma membrane"/>
    <property type="evidence" value="ECO:0007669"/>
    <property type="project" value="UniProtKB-SubCell"/>
</dbReference>
<dbReference type="GO" id="GO:0043772">
    <property type="term" value="F:acyl-phosphate glycerol-3-phosphate acyltransferase activity"/>
    <property type="evidence" value="ECO:0007669"/>
    <property type="project" value="UniProtKB-UniRule"/>
</dbReference>
<dbReference type="GO" id="GO:0008654">
    <property type="term" value="P:phospholipid biosynthetic process"/>
    <property type="evidence" value="ECO:0007669"/>
    <property type="project" value="UniProtKB-UniRule"/>
</dbReference>
<dbReference type="HAMAP" id="MF_01043">
    <property type="entry name" value="PlsY"/>
    <property type="match status" value="1"/>
</dbReference>
<dbReference type="InterPro" id="IPR003811">
    <property type="entry name" value="G3P_acylTferase_PlsY"/>
</dbReference>
<dbReference type="NCBIfam" id="TIGR00023">
    <property type="entry name" value="glycerol-3-phosphate 1-O-acyltransferase PlsY"/>
    <property type="match status" value="1"/>
</dbReference>
<dbReference type="PANTHER" id="PTHR30309:SF0">
    <property type="entry name" value="GLYCEROL-3-PHOSPHATE ACYLTRANSFERASE-RELATED"/>
    <property type="match status" value="1"/>
</dbReference>
<dbReference type="PANTHER" id="PTHR30309">
    <property type="entry name" value="INNER MEMBRANE PROTEIN YGIH"/>
    <property type="match status" value="1"/>
</dbReference>
<dbReference type="Pfam" id="PF02660">
    <property type="entry name" value="G3P_acyltransf"/>
    <property type="match status" value="1"/>
</dbReference>
<dbReference type="SMART" id="SM01207">
    <property type="entry name" value="G3P_acyltransf"/>
    <property type="match status" value="1"/>
</dbReference>
<feature type="chain" id="PRO_1000136096" description="Glycerol-3-phosphate acyltransferase">
    <location>
        <begin position="1"/>
        <end position="205"/>
    </location>
</feature>
<feature type="transmembrane region" description="Helical" evidence="1">
    <location>
        <begin position="4"/>
        <end position="24"/>
    </location>
</feature>
<feature type="transmembrane region" description="Helical" evidence="1">
    <location>
        <begin position="80"/>
        <end position="100"/>
    </location>
</feature>
<feature type="transmembrane region" description="Helical" evidence="1">
    <location>
        <begin position="107"/>
        <end position="127"/>
    </location>
</feature>
<feature type="transmembrane region" description="Helical" evidence="1">
    <location>
        <begin position="130"/>
        <end position="150"/>
    </location>
</feature>
<feature type="transmembrane region" description="Helical" evidence="1">
    <location>
        <begin position="155"/>
        <end position="175"/>
    </location>
</feature>
<evidence type="ECO:0000255" key="1">
    <source>
        <dbReference type="HAMAP-Rule" id="MF_01043"/>
    </source>
</evidence>
<name>PLSY_KLEP3</name>
<keyword id="KW-0997">Cell inner membrane</keyword>
<keyword id="KW-1003">Cell membrane</keyword>
<keyword id="KW-0444">Lipid biosynthesis</keyword>
<keyword id="KW-0443">Lipid metabolism</keyword>
<keyword id="KW-0472">Membrane</keyword>
<keyword id="KW-0594">Phospholipid biosynthesis</keyword>
<keyword id="KW-1208">Phospholipid metabolism</keyword>
<keyword id="KW-0808">Transferase</keyword>
<keyword id="KW-0812">Transmembrane</keyword>
<keyword id="KW-1133">Transmembrane helix</keyword>
<reference key="1">
    <citation type="journal article" date="2008" name="PLoS Genet.">
        <title>Complete genome sequence of the N2-fixing broad host range endophyte Klebsiella pneumoniae 342 and virulence predictions verified in mice.</title>
        <authorList>
            <person name="Fouts D.E."/>
            <person name="Tyler H.L."/>
            <person name="DeBoy R.T."/>
            <person name="Daugherty S."/>
            <person name="Ren Q."/>
            <person name="Badger J.H."/>
            <person name="Durkin A.S."/>
            <person name="Huot H."/>
            <person name="Shrivastava S."/>
            <person name="Kothari S."/>
            <person name="Dodson R.J."/>
            <person name="Mohamoud Y."/>
            <person name="Khouri H."/>
            <person name="Roesch L.F.W."/>
            <person name="Krogfelt K.A."/>
            <person name="Struve C."/>
            <person name="Triplett E.W."/>
            <person name="Methe B.A."/>
        </authorList>
    </citation>
    <scope>NUCLEOTIDE SEQUENCE [LARGE SCALE GENOMIC DNA]</scope>
    <source>
        <strain>342</strain>
    </source>
</reference>
<proteinExistence type="inferred from homology"/>
<organism>
    <name type="scientific">Klebsiella pneumoniae (strain 342)</name>
    <dbReference type="NCBI Taxonomy" id="507522"/>
    <lineage>
        <taxon>Bacteria</taxon>
        <taxon>Pseudomonadati</taxon>
        <taxon>Pseudomonadota</taxon>
        <taxon>Gammaproteobacteria</taxon>
        <taxon>Enterobacterales</taxon>
        <taxon>Enterobacteriaceae</taxon>
        <taxon>Klebsiella/Raoultella group</taxon>
        <taxon>Klebsiella</taxon>
        <taxon>Klebsiella pneumoniae complex</taxon>
    </lineage>
</organism>
<sequence length="205" mass="22070">MSAIAPGLVLLAYLCGSISSAILVCRLAGLPDPRDSGSGNPGATNVLRIGGKGAAVAVLIFDVLKGMLPVWGAWALGLTPFWLGLVAIAACVGHIWPVFFHFRGGKGVATAFGAIAPIGLDLTGVMAGTWLLTILLSGYSSLGAIVSALIAPFYVWWFKPQYTFPVSMLSCLILLRHHDNIQRLWRRQESKIWTRMKKKKAPEQK</sequence>
<accession>B5XU32</accession>
<protein>
    <recommendedName>
        <fullName evidence="1">Glycerol-3-phosphate acyltransferase</fullName>
    </recommendedName>
    <alternativeName>
        <fullName evidence="1">Acyl-PO4 G3P acyltransferase</fullName>
    </alternativeName>
    <alternativeName>
        <fullName evidence="1">Acyl-phosphate--glycerol-3-phosphate acyltransferase</fullName>
    </alternativeName>
    <alternativeName>
        <fullName evidence="1">G3P acyltransferase</fullName>
        <shortName evidence="1">GPAT</shortName>
        <ecNumber evidence="1">2.3.1.275</ecNumber>
    </alternativeName>
    <alternativeName>
        <fullName evidence="1">Lysophosphatidic acid synthase</fullName>
        <shortName evidence="1">LPA synthase</shortName>
    </alternativeName>
</protein>
<comment type="function">
    <text evidence="1">Catalyzes the transfer of an acyl group from acyl-phosphate (acyl-PO(4)) to glycerol-3-phosphate (G3P) to form lysophosphatidic acid (LPA). This enzyme utilizes acyl-phosphate as fatty acyl donor, but not acyl-CoA or acyl-ACP.</text>
</comment>
<comment type="catalytic activity">
    <reaction evidence="1">
        <text>an acyl phosphate + sn-glycerol 3-phosphate = a 1-acyl-sn-glycero-3-phosphate + phosphate</text>
        <dbReference type="Rhea" id="RHEA:34075"/>
        <dbReference type="ChEBI" id="CHEBI:43474"/>
        <dbReference type="ChEBI" id="CHEBI:57597"/>
        <dbReference type="ChEBI" id="CHEBI:57970"/>
        <dbReference type="ChEBI" id="CHEBI:59918"/>
        <dbReference type="EC" id="2.3.1.275"/>
    </reaction>
</comment>
<comment type="pathway">
    <text evidence="1">Lipid metabolism; phospholipid metabolism.</text>
</comment>
<comment type="subunit">
    <text evidence="1">Probably interacts with PlsX.</text>
</comment>
<comment type="subcellular location">
    <subcellularLocation>
        <location evidence="1">Cell inner membrane</location>
        <topology evidence="1">Multi-pass membrane protein</topology>
    </subcellularLocation>
</comment>
<comment type="similarity">
    <text evidence="1">Belongs to the PlsY family.</text>
</comment>
<gene>
    <name evidence="1" type="primary">plsY</name>
    <name type="ordered locus">KPK_0657</name>
</gene>